<protein>
    <recommendedName>
        <fullName>DNA mismatch repair protein MSH2</fullName>
    </recommendedName>
    <alternativeName>
        <fullName>MUS1</fullName>
    </alternativeName>
</protein>
<proteinExistence type="inferred from homology"/>
<accession>Q9XGC9</accession>
<sequence length="942" mass="105071">MEGDDFTPEGGKLPEFKLDARQAQGFISFFKKLPQDPRAVRLFDRRDYYTAHGENATFIARTYYHTMSALRQLGSSSDGILSASVSKAMFETIARNILLERTDCTLELYEGSGSNWRLTKSGTPGNIGSFEDILFANNDMEDSPVIVALFPACRESQLYVGLSFLDMTNRKLGLAEFPEDSRFTNVESALVALGCKECLLPADCEKSIDLNPLQDVISNCNVLLTEKKKADFKSRDLAQDLGRIIRGSVEPVRDLLSQFDYALGPLGALLSYAELLADDTNYGNYTIEKYNLNCYMRLDSAAVRALNIAEGKTDVNKNFSLFGLMNRTCTVGMGKRLLNRWLKQPLLDVNEINNRLDMVQAFVEDPELRQGLRQQLKRISDIDRLTHSLRKKSANLQPVVKLYQSCSRIPYIKGILQQYNGQFSTLIRSKFLEPLEEWMAKNRFGRFSSLVETAIDLAQLENGEYRISPLYSSDLGVLKDELSVVENHINNLHVDTASDLDLSVDKQLKLEKGSLGHVFRMSKKEEQKVRKKLTGSYLIIETRKDGVKFTNSKLKNLSDQYQALFGEYTSCQKKVVGDVVRVSGTFSEVFENFAAVLSELDVLQSFADLATSCPVPYVRPDITASDEGDIVLLGSRHPCLEAQDGVNFIPNDCTLVRGKSWFQIITGPNMGGKSTFIRQVGVNVLMAQVGSFVPCDQASISVRDCIFARVGAGDCQLHGVSTFMQEMLETASILKGASDKSLIIIDELGRGTSTYDGFGLAWAICEHLMEVTRAPTLFATHFHELTALAHRNDDEHQHISDIGVANYHVGAHIDPLSRKLTMLYKVEPGACDQSFGIHVAEFANFPEAVVALAKSKAAELEDFSTTPTFSDDLKDEVGSKRKRVFSPDDITRGAARARLFLEEFAALPMDEMDGSKILEMATKMKADLQKDAADNPWLQQFF</sequence>
<name>MSH2_MAIZE</name>
<reference key="1">
    <citation type="submission" date="1999-05" db="EMBL/GenBank/DDBJ databases">
        <title>Isolation and characterization of mus1, a putative mismatch repair gene of Zea mays.</title>
        <authorList>
            <person name="Horwath M."/>
            <person name="Kunze R."/>
        </authorList>
    </citation>
    <scope>NUCLEOTIDE SEQUENCE [GENOMIC DNA]</scope>
</reference>
<gene>
    <name type="primary">MUS1</name>
</gene>
<dbReference type="EMBL" id="AJ238785">
    <property type="protein sequence ID" value="CAB42554.1"/>
    <property type="molecule type" value="Genomic_DNA"/>
</dbReference>
<dbReference type="RefSeq" id="NP_001146301.1">
    <property type="nucleotide sequence ID" value="NM_001152829.1"/>
</dbReference>
<dbReference type="SMR" id="Q9XGC9"/>
<dbReference type="FunCoup" id="Q9XGC9">
    <property type="interactions" value="2548"/>
</dbReference>
<dbReference type="STRING" id="4577.Q9XGC9"/>
<dbReference type="PaxDb" id="4577-GRMZM2G056075_P01"/>
<dbReference type="EnsemblPlants" id="Zm00001eb326520_T001">
    <property type="protein sequence ID" value="Zm00001eb326520_P001"/>
    <property type="gene ID" value="Zm00001eb326520"/>
</dbReference>
<dbReference type="GeneID" id="100279876"/>
<dbReference type="Gramene" id="Zm00001eb326520_T001">
    <property type="protein sequence ID" value="Zm00001eb326520_P001"/>
    <property type="gene ID" value="Zm00001eb326520"/>
</dbReference>
<dbReference type="KEGG" id="zma:100279876"/>
<dbReference type="eggNOG" id="KOG0219">
    <property type="taxonomic scope" value="Eukaryota"/>
</dbReference>
<dbReference type="HOGENOM" id="CLU_002472_10_0_1"/>
<dbReference type="InParanoid" id="Q9XGC9"/>
<dbReference type="OrthoDB" id="295033at2759"/>
<dbReference type="Proteomes" id="UP000007305">
    <property type="component" value="Chromosome 7"/>
</dbReference>
<dbReference type="ExpressionAtlas" id="Q9XGC9">
    <property type="expression patterns" value="baseline and differential"/>
</dbReference>
<dbReference type="GO" id="GO:0032301">
    <property type="term" value="C:MutSalpha complex"/>
    <property type="evidence" value="ECO:0000318"/>
    <property type="project" value="GO_Central"/>
</dbReference>
<dbReference type="GO" id="GO:0005634">
    <property type="term" value="C:nucleus"/>
    <property type="evidence" value="ECO:0000318"/>
    <property type="project" value="GO_Central"/>
</dbReference>
<dbReference type="GO" id="GO:0005524">
    <property type="term" value="F:ATP binding"/>
    <property type="evidence" value="ECO:0007669"/>
    <property type="project" value="UniProtKB-KW"/>
</dbReference>
<dbReference type="GO" id="GO:0140664">
    <property type="term" value="F:ATP-dependent DNA damage sensor activity"/>
    <property type="evidence" value="ECO:0007669"/>
    <property type="project" value="InterPro"/>
</dbReference>
<dbReference type="GO" id="GO:0030983">
    <property type="term" value="F:mismatched DNA binding"/>
    <property type="evidence" value="ECO:0000318"/>
    <property type="project" value="GO_Central"/>
</dbReference>
<dbReference type="GO" id="GO:0006298">
    <property type="term" value="P:mismatch repair"/>
    <property type="evidence" value="ECO:0000318"/>
    <property type="project" value="GO_Central"/>
</dbReference>
<dbReference type="GO" id="GO:0006312">
    <property type="term" value="P:mitotic recombination"/>
    <property type="evidence" value="ECO:0000318"/>
    <property type="project" value="GO_Central"/>
</dbReference>
<dbReference type="CDD" id="cd03285">
    <property type="entry name" value="ABC_MSH2_euk"/>
    <property type="match status" value="1"/>
</dbReference>
<dbReference type="FunFam" id="1.10.1420.10:FF:000003">
    <property type="entry name" value="DNA mismatch repair protein"/>
    <property type="match status" value="1"/>
</dbReference>
<dbReference type="FunFam" id="3.30.420.110:FF:000002">
    <property type="entry name" value="DNA mismatch repair protein"/>
    <property type="match status" value="1"/>
</dbReference>
<dbReference type="FunFam" id="1.10.1420.10:FF:000021">
    <property type="entry name" value="DNA mismatch repair protein MSH2"/>
    <property type="match status" value="1"/>
</dbReference>
<dbReference type="FunFam" id="3.40.1170.10:FF:000013">
    <property type="entry name" value="DNA mismatch repair protein MSH2"/>
    <property type="match status" value="1"/>
</dbReference>
<dbReference type="FunFam" id="3.40.50.300:FF:000925">
    <property type="entry name" value="DNA mismatch repair protein MSH2"/>
    <property type="match status" value="1"/>
</dbReference>
<dbReference type="Gene3D" id="1.10.1420.10">
    <property type="match status" value="2"/>
</dbReference>
<dbReference type="Gene3D" id="3.40.1170.10">
    <property type="entry name" value="DNA repair protein MutS, domain I"/>
    <property type="match status" value="1"/>
</dbReference>
<dbReference type="Gene3D" id="3.30.420.110">
    <property type="entry name" value="MutS, connector domain"/>
    <property type="match status" value="1"/>
</dbReference>
<dbReference type="Gene3D" id="3.40.50.300">
    <property type="entry name" value="P-loop containing nucleotide triphosphate hydrolases"/>
    <property type="match status" value="1"/>
</dbReference>
<dbReference type="InterPro" id="IPR011184">
    <property type="entry name" value="DNA_mismatch_repair_Msh2"/>
</dbReference>
<dbReference type="InterPro" id="IPR007695">
    <property type="entry name" value="DNA_mismatch_repair_MutS-lik_N"/>
</dbReference>
<dbReference type="InterPro" id="IPR000432">
    <property type="entry name" value="DNA_mismatch_repair_MutS_C"/>
</dbReference>
<dbReference type="InterPro" id="IPR007861">
    <property type="entry name" value="DNA_mismatch_repair_MutS_clamp"/>
</dbReference>
<dbReference type="InterPro" id="IPR007696">
    <property type="entry name" value="DNA_mismatch_repair_MutS_core"/>
</dbReference>
<dbReference type="InterPro" id="IPR016151">
    <property type="entry name" value="DNA_mismatch_repair_MutS_N"/>
</dbReference>
<dbReference type="InterPro" id="IPR036187">
    <property type="entry name" value="DNA_mismatch_repair_MutS_sf"/>
</dbReference>
<dbReference type="InterPro" id="IPR007860">
    <property type="entry name" value="DNA_mmatch_repair_MutS_con_dom"/>
</dbReference>
<dbReference type="InterPro" id="IPR032642">
    <property type="entry name" value="Msh2_ATP-bd"/>
</dbReference>
<dbReference type="InterPro" id="IPR045076">
    <property type="entry name" value="MutS"/>
</dbReference>
<dbReference type="InterPro" id="IPR036678">
    <property type="entry name" value="MutS_con_dom_sf"/>
</dbReference>
<dbReference type="InterPro" id="IPR027417">
    <property type="entry name" value="P-loop_NTPase"/>
</dbReference>
<dbReference type="PANTHER" id="PTHR11361:SF35">
    <property type="entry name" value="DNA MISMATCH REPAIR PROTEIN MSH2"/>
    <property type="match status" value="1"/>
</dbReference>
<dbReference type="PANTHER" id="PTHR11361">
    <property type="entry name" value="DNA MISMATCH REPAIR PROTEIN MUTS FAMILY MEMBER"/>
    <property type="match status" value="1"/>
</dbReference>
<dbReference type="Pfam" id="PF01624">
    <property type="entry name" value="MutS_I"/>
    <property type="match status" value="1"/>
</dbReference>
<dbReference type="Pfam" id="PF05188">
    <property type="entry name" value="MutS_II"/>
    <property type="match status" value="1"/>
</dbReference>
<dbReference type="Pfam" id="PF05192">
    <property type="entry name" value="MutS_III"/>
    <property type="match status" value="1"/>
</dbReference>
<dbReference type="Pfam" id="PF05190">
    <property type="entry name" value="MutS_IV"/>
    <property type="match status" value="1"/>
</dbReference>
<dbReference type="Pfam" id="PF00488">
    <property type="entry name" value="MutS_V"/>
    <property type="match status" value="1"/>
</dbReference>
<dbReference type="PIRSF" id="PIRSF005813">
    <property type="entry name" value="MSH2"/>
    <property type="match status" value="1"/>
</dbReference>
<dbReference type="SMART" id="SM00534">
    <property type="entry name" value="MUTSac"/>
    <property type="match status" value="1"/>
</dbReference>
<dbReference type="SMART" id="SM00533">
    <property type="entry name" value="MUTSd"/>
    <property type="match status" value="1"/>
</dbReference>
<dbReference type="SUPFAM" id="SSF48334">
    <property type="entry name" value="DNA repair protein MutS, domain III"/>
    <property type="match status" value="1"/>
</dbReference>
<dbReference type="SUPFAM" id="SSF52540">
    <property type="entry name" value="P-loop containing nucleoside triphosphate hydrolases"/>
    <property type="match status" value="1"/>
</dbReference>
<dbReference type="PROSITE" id="PS00486">
    <property type="entry name" value="DNA_MISMATCH_REPAIR_2"/>
    <property type="match status" value="1"/>
</dbReference>
<keyword id="KW-0067">ATP-binding</keyword>
<keyword id="KW-0227">DNA damage</keyword>
<keyword id="KW-0234">DNA repair</keyword>
<keyword id="KW-0238">DNA-binding</keyword>
<keyword id="KW-0547">Nucleotide-binding</keyword>
<keyword id="KW-0539">Nucleus</keyword>
<keyword id="KW-1185">Reference proteome</keyword>
<feature type="chain" id="PRO_0000115188" description="DNA mismatch repair protein MSH2">
    <location>
        <begin position="1"/>
        <end position="942"/>
    </location>
</feature>
<feature type="binding site" evidence="2">
    <location>
        <begin position="667"/>
        <end position="674"/>
    </location>
    <ligand>
        <name>ATP</name>
        <dbReference type="ChEBI" id="CHEBI:30616"/>
    </ligand>
</feature>
<comment type="function">
    <text evidence="1">Involved in postreplication mismatch repair. Binds specifically to DNA containing mismatched nucleotides thus providing a target for the excision repair processes characteristic of postreplication mismatch repair (By similarity).</text>
</comment>
<comment type="subunit">
    <text evidence="1">Heterodimer of MSH2 and MSH6 (GTBP).</text>
</comment>
<comment type="subcellular location">
    <subcellularLocation>
        <location evidence="3">Nucleus</location>
    </subcellularLocation>
</comment>
<comment type="similarity">
    <text evidence="3">Belongs to the DNA mismatch repair MutS family.</text>
</comment>
<organism>
    <name type="scientific">Zea mays</name>
    <name type="common">Maize</name>
    <dbReference type="NCBI Taxonomy" id="4577"/>
    <lineage>
        <taxon>Eukaryota</taxon>
        <taxon>Viridiplantae</taxon>
        <taxon>Streptophyta</taxon>
        <taxon>Embryophyta</taxon>
        <taxon>Tracheophyta</taxon>
        <taxon>Spermatophyta</taxon>
        <taxon>Magnoliopsida</taxon>
        <taxon>Liliopsida</taxon>
        <taxon>Poales</taxon>
        <taxon>Poaceae</taxon>
        <taxon>PACMAD clade</taxon>
        <taxon>Panicoideae</taxon>
        <taxon>Andropogonodae</taxon>
        <taxon>Andropogoneae</taxon>
        <taxon>Tripsacinae</taxon>
        <taxon>Zea</taxon>
    </lineage>
</organism>
<evidence type="ECO:0000250" key="1"/>
<evidence type="ECO:0000255" key="2"/>
<evidence type="ECO:0000305" key="3"/>